<proteinExistence type="inferred from homology"/>
<protein>
    <recommendedName>
        <fullName>Putative 2,3-diketo-5-methylthiopentyl-1-phosphate enolase</fullName>
        <shortName>DK-MTP-1-P enolase</shortName>
        <ecNumber>5.3.2.5</ecNumber>
    </recommendedName>
    <alternativeName>
        <fullName>RuBisCO-like protein</fullName>
        <shortName>RLP</shortName>
    </alternativeName>
</protein>
<organism>
    <name type="scientific">Shouchella clausii (strain KSM-K16)</name>
    <name type="common">Alkalihalobacillus clausii</name>
    <dbReference type="NCBI Taxonomy" id="66692"/>
    <lineage>
        <taxon>Bacteria</taxon>
        <taxon>Bacillati</taxon>
        <taxon>Bacillota</taxon>
        <taxon>Bacilli</taxon>
        <taxon>Bacillales</taxon>
        <taxon>Bacillaceae</taxon>
        <taxon>Shouchella</taxon>
    </lineage>
</organism>
<evidence type="ECO:0000250" key="1"/>
<evidence type="ECO:0000305" key="2"/>
<sequence>MAQINAVYYVSDSNEFIEEKAEKMATGLTAKPWQEMPEAEKQESFAYKGKVVSINEDPSYGEGSIVTISFPVAYEVPDFPSILTTTYGRLSYEPNVKLLDLQFSNDLVERFPGPLYGIEGIRDLVEVEGRPLAMSVAKGAIGRSIDSFHEQMLAHSYGGIDIIQDDERLFEHNWTPYEQRVPAGLAAIAEAAERTGRTPLYVVNLTGKTFELKERAREAIGLGAPALMLNVYAYGIDVLQGLREDPEIDVPIFAHSSLTGMMTRSKQHGIASRLLLGKLLRMAGADAVLFPSPYGRIGINPEEAQRVKDQLTMTTQMKRAFPIPSAGIDFQTIATVRQDFGEDVIINLGGSVHRYKGGVEAGGKAFIEALNSAN</sequence>
<comment type="function">
    <text evidence="1">Catalyzes the enolization of 2,3-diketo-5-methylthiopentyl-1-phosphate (DK-MTP-1-P) into 2-hydroxy-3-keto-5-methylthiopentenyl-1-phosphate (HK-MTPenyl-1-P).</text>
</comment>
<comment type="catalytic activity">
    <reaction>
        <text>5-methylsulfanyl-2,3-dioxopentyl phosphate = 2-hydroxy-5-methylsulfanyl-3-oxopent-1-enyl phosphate</text>
        <dbReference type="Rhea" id="RHEA:18769"/>
        <dbReference type="ChEBI" id="CHEBI:58828"/>
        <dbReference type="ChEBI" id="CHEBI:59505"/>
        <dbReference type="EC" id="5.3.2.5"/>
    </reaction>
</comment>
<comment type="cofactor">
    <cofactor evidence="1">
        <name>Mg(2+)</name>
        <dbReference type="ChEBI" id="CHEBI:18420"/>
    </cofactor>
    <text evidence="1">Binds 1 Mg(2+) ion per subunit.</text>
</comment>
<comment type="pathway">
    <text>Amino-acid biosynthesis; L-methionine biosynthesis via salvage pathway; L-methionine from S-methyl-5-thio-alpha-D-ribose 1-phosphate: step 3/6.</text>
</comment>
<comment type="subunit">
    <text evidence="1">Homodimer.</text>
</comment>
<comment type="miscellaneous">
    <text evidence="1">Has no RuBP-carboxylation activity.</text>
</comment>
<comment type="similarity">
    <text evidence="2">Belongs to the RuBisCO large chain family. Type IV subfamily.</text>
</comment>
<comment type="caution">
    <text evidence="2">Although this resembles mtnW of B.subtilis, its genomic context is different, it is too short and it is missing a Mg-binding residue. Thus it may not be a functional ortholog.</text>
</comment>
<feature type="chain" id="PRO_0000062695" description="Putative 2,3-diketo-5-methylthiopentyl-1-phosphate enolase">
    <location>
        <begin position="1"/>
        <end position="374"/>
    </location>
</feature>
<feature type="binding site" evidence="1">
    <location>
        <position position="138"/>
    </location>
    <ligand>
        <name>substrate</name>
    </ligand>
</feature>
<feature type="binding site" evidence="1">
    <location>
        <begin position="164"/>
        <end position="167"/>
    </location>
    <ligand>
        <name>substrate</name>
    </ligand>
</feature>
<feature type="binding site" evidence="1">
    <location>
        <position position="166"/>
    </location>
    <ligand>
        <name>Mg(2+)</name>
        <dbReference type="ChEBI" id="CHEBI:18420"/>
    </ligand>
</feature>
<feature type="binding site" evidence="1">
    <location>
        <position position="255"/>
    </location>
    <ligand>
        <name>substrate</name>
    </ligand>
</feature>
<feature type="binding site" evidence="1">
    <location>
        <position position="327"/>
    </location>
    <ligand>
        <name>substrate</name>
    </ligand>
</feature>
<feature type="binding site" evidence="1">
    <location>
        <begin position="349"/>
        <end position="350"/>
    </location>
    <ligand>
        <name>substrate</name>
    </ligand>
</feature>
<name>MTNW_SHOC1</name>
<keyword id="KW-0028">Amino-acid biosynthesis</keyword>
<keyword id="KW-0413">Isomerase</keyword>
<keyword id="KW-0460">Magnesium</keyword>
<keyword id="KW-0479">Metal-binding</keyword>
<keyword id="KW-0486">Methionine biosynthesis</keyword>
<keyword id="KW-1185">Reference proteome</keyword>
<accession>Q5WH45</accession>
<reference key="1">
    <citation type="submission" date="2003-10" db="EMBL/GenBank/DDBJ databases">
        <title>The complete genome sequence of the alkaliphilic Bacillus clausii KSM-K16.</title>
        <authorList>
            <person name="Takaki Y."/>
            <person name="Kageyama Y."/>
            <person name="Shimamura S."/>
            <person name="Suzuki H."/>
            <person name="Nishi S."/>
            <person name="Hatada Y."/>
            <person name="Kawai S."/>
            <person name="Ito S."/>
            <person name="Horikoshi K."/>
        </authorList>
    </citation>
    <scope>NUCLEOTIDE SEQUENCE [LARGE SCALE GENOMIC DNA]</scope>
    <source>
        <strain>KSM-K16</strain>
    </source>
</reference>
<dbReference type="EC" id="5.3.2.5"/>
<dbReference type="EMBL" id="AP006627">
    <property type="protein sequence ID" value="BAD64310.1"/>
    <property type="molecule type" value="Genomic_DNA"/>
</dbReference>
<dbReference type="RefSeq" id="WP_011246618.1">
    <property type="nucleotide sequence ID" value="NC_006582.1"/>
</dbReference>
<dbReference type="SMR" id="Q5WH45"/>
<dbReference type="STRING" id="66692.ABC1775"/>
<dbReference type="KEGG" id="bcl:ABC1775"/>
<dbReference type="eggNOG" id="COG1850">
    <property type="taxonomic scope" value="Bacteria"/>
</dbReference>
<dbReference type="HOGENOM" id="CLU_031450_3_1_9"/>
<dbReference type="OrthoDB" id="9770811at2"/>
<dbReference type="UniPathway" id="UPA00904">
    <property type="reaction ID" value="UER00876"/>
</dbReference>
<dbReference type="Proteomes" id="UP000001168">
    <property type="component" value="Chromosome"/>
</dbReference>
<dbReference type="GO" id="GO:0043715">
    <property type="term" value="F:2,3-diketo-5-methylthiopentyl-1-phosphate enolase activity"/>
    <property type="evidence" value="ECO:0007669"/>
    <property type="project" value="UniProtKB-EC"/>
</dbReference>
<dbReference type="GO" id="GO:0000287">
    <property type="term" value="F:magnesium ion binding"/>
    <property type="evidence" value="ECO:0007669"/>
    <property type="project" value="InterPro"/>
</dbReference>
<dbReference type="GO" id="GO:0016984">
    <property type="term" value="F:ribulose-bisphosphate carboxylase activity"/>
    <property type="evidence" value="ECO:0007669"/>
    <property type="project" value="InterPro"/>
</dbReference>
<dbReference type="GO" id="GO:0015977">
    <property type="term" value="P:carbon fixation"/>
    <property type="evidence" value="ECO:0007669"/>
    <property type="project" value="InterPro"/>
</dbReference>
<dbReference type="GO" id="GO:0019509">
    <property type="term" value="P:L-methionine salvage from methylthioadenosine"/>
    <property type="evidence" value="ECO:0007669"/>
    <property type="project" value="UniProtKB-UniPathway"/>
</dbReference>
<dbReference type="Gene3D" id="3.20.20.110">
    <property type="entry name" value="Ribulose bisphosphate carboxylase, large subunit, C-terminal domain"/>
    <property type="match status" value="1"/>
</dbReference>
<dbReference type="Gene3D" id="3.30.70.150">
    <property type="entry name" value="RuBisCO large subunit, N-terminal domain"/>
    <property type="match status" value="1"/>
</dbReference>
<dbReference type="InterPro" id="IPR033966">
    <property type="entry name" value="RuBisCO"/>
</dbReference>
<dbReference type="InterPro" id="IPR000685">
    <property type="entry name" value="RuBisCO_lsu_C"/>
</dbReference>
<dbReference type="InterPro" id="IPR036376">
    <property type="entry name" value="RuBisCO_lsu_C_sf"/>
</dbReference>
<dbReference type="InterPro" id="IPR036422">
    <property type="entry name" value="RuBisCO_lsu_N_sf"/>
</dbReference>
<dbReference type="NCBIfam" id="NF007095">
    <property type="entry name" value="PRK09549.1"/>
    <property type="match status" value="1"/>
</dbReference>
<dbReference type="PANTHER" id="PTHR42704">
    <property type="entry name" value="RIBULOSE BISPHOSPHATE CARBOXYLASE"/>
    <property type="match status" value="1"/>
</dbReference>
<dbReference type="PANTHER" id="PTHR42704:SF17">
    <property type="entry name" value="RIBULOSE BISPHOSPHATE CARBOXYLASE LARGE CHAIN"/>
    <property type="match status" value="1"/>
</dbReference>
<dbReference type="Pfam" id="PF00016">
    <property type="entry name" value="RuBisCO_large"/>
    <property type="match status" value="1"/>
</dbReference>
<dbReference type="SUPFAM" id="SSF51649">
    <property type="entry name" value="RuBisCo, C-terminal domain"/>
    <property type="match status" value="1"/>
</dbReference>
<dbReference type="SUPFAM" id="SSF54966">
    <property type="entry name" value="RuBisCO, large subunit, small (N-terminal) domain"/>
    <property type="match status" value="1"/>
</dbReference>
<gene>
    <name type="primary">mtnW</name>
    <name type="ordered locus">ABC1775</name>
</gene>